<feature type="chain" id="PRO_0000219742" description="Photosystem II reaction center protein L">
    <location>
        <begin position="1"/>
        <end position="38"/>
    </location>
</feature>
<feature type="transmembrane region" description="Helical" evidence="1">
    <location>
        <begin position="17"/>
        <end position="37"/>
    </location>
</feature>
<organism>
    <name type="scientific">Mesostigma viride</name>
    <name type="common">Green alga</name>
    <dbReference type="NCBI Taxonomy" id="41882"/>
    <lineage>
        <taxon>Eukaryota</taxon>
        <taxon>Viridiplantae</taxon>
        <taxon>Streptophyta</taxon>
        <taxon>Mesostigmatophyceae</taxon>
        <taxon>Mesostigmatales</taxon>
        <taxon>Mesostigmataceae</taxon>
        <taxon>Mesostigma</taxon>
    </lineage>
</organism>
<protein>
    <recommendedName>
        <fullName evidence="1">Photosystem II reaction center protein L</fullName>
        <shortName evidence="1">PSII-L</shortName>
    </recommendedName>
</protein>
<sequence>MTEPNPNKQEVELNRTSLYWGLLLIFVLAILFSSYIFN</sequence>
<accession>Q9MUQ2</accession>
<reference key="1">
    <citation type="journal article" date="2000" name="Nature">
        <title>Ancestral chloroplast genome in Mesostigma viride reveals an early branch of green plant evolution.</title>
        <authorList>
            <person name="Lemieux C."/>
            <person name="Otis C."/>
            <person name="Turmel M."/>
        </authorList>
    </citation>
    <scope>NUCLEOTIDE SEQUENCE [LARGE SCALE GENOMIC DNA]</scope>
    <source>
        <strain>NIES-296 / KY-14 / CCMP 2046</strain>
    </source>
</reference>
<dbReference type="EMBL" id="AF166114">
    <property type="protein sequence ID" value="AAF43848.1"/>
    <property type="molecule type" value="Genomic_DNA"/>
</dbReference>
<dbReference type="RefSeq" id="NP_038408.1">
    <property type="nucleotide sequence ID" value="NC_002186.1"/>
</dbReference>
<dbReference type="SMR" id="Q9MUQ2"/>
<dbReference type="GeneID" id="800866"/>
<dbReference type="GO" id="GO:0009535">
    <property type="term" value="C:chloroplast thylakoid membrane"/>
    <property type="evidence" value="ECO:0007669"/>
    <property type="project" value="UniProtKB-SubCell"/>
</dbReference>
<dbReference type="GO" id="GO:0009539">
    <property type="term" value="C:photosystem II reaction center"/>
    <property type="evidence" value="ECO:0007669"/>
    <property type="project" value="InterPro"/>
</dbReference>
<dbReference type="GO" id="GO:0015979">
    <property type="term" value="P:photosynthesis"/>
    <property type="evidence" value="ECO:0007669"/>
    <property type="project" value="UniProtKB-UniRule"/>
</dbReference>
<dbReference type="HAMAP" id="MF_01317">
    <property type="entry name" value="PSII_PsbL"/>
    <property type="match status" value="1"/>
</dbReference>
<dbReference type="InterPro" id="IPR003372">
    <property type="entry name" value="PSII_PsbL"/>
</dbReference>
<dbReference type="InterPro" id="IPR037266">
    <property type="entry name" value="PSII_PsbL_sf"/>
</dbReference>
<dbReference type="NCBIfam" id="NF001972">
    <property type="entry name" value="PRK00753.1"/>
    <property type="match status" value="1"/>
</dbReference>
<dbReference type="Pfam" id="PF02419">
    <property type="entry name" value="PsbL"/>
    <property type="match status" value="1"/>
</dbReference>
<dbReference type="SUPFAM" id="SSF161017">
    <property type="entry name" value="Photosystem II reaction center protein L, PsbL"/>
    <property type="match status" value="1"/>
</dbReference>
<comment type="function">
    <text evidence="1">One of the components of the core complex of photosystem II (PSII). PSII is a light-driven water:plastoquinone oxidoreductase that uses light energy to abstract electrons from H(2)O, generating O(2) and a proton gradient subsequently used for ATP formation. It consists of a core antenna complex that captures photons, and an electron transfer chain that converts photonic excitation into a charge separation. This subunit is found at the monomer-monomer interface and is required for correct PSII assembly and/or dimerization.</text>
</comment>
<comment type="subunit">
    <text evidence="1">PSII is composed of 1 copy each of membrane proteins PsbA, PsbB, PsbC, PsbD, PsbE, PsbF, PsbH, PsbI, PsbJ, PsbK, PsbL, PsbM, PsbT, PsbX, PsbY, PsbZ, Psb30/Ycf12, at least 3 peripheral proteins of the oxygen-evolving complex and a large number of cofactors. It forms dimeric complexes.</text>
</comment>
<comment type="subcellular location">
    <subcellularLocation>
        <location evidence="1">Plastid</location>
        <location evidence="1">Chloroplast thylakoid membrane</location>
        <topology evidence="1">Single-pass membrane protein</topology>
    </subcellularLocation>
</comment>
<comment type="similarity">
    <text evidence="1">Belongs to the PsbL family.</text>
</comment>
<gene>
    <name evidence="1" type="primary">psbL</name>
</gene>
<geneLocation type="chloroplast"/>
<keyword id="KW-0150">Chloroplast</keyword>
<keyword id="KW-0472">Membrane</keyword>
<keyword id="KW-0602">Photosynthesis</keyword>
<keyword id="KW-0604">Photosystem II</keyword>
<keyword id="KW-0934">Plastid</keyword>
<keyword id="KW-0674">Reaction center</keyword>
<keyword id="KW-0793">Thylakoid</keyword>
<keyword id="KW-0812">Transmembrane</keyword>
<keyword id="KW-1133">Transmembrane helix</keyword>
<proteinExistence type="inferred from homology"/>
<evidence type="ECO:0000255" key="1">
    <source>
        <dbReference type="HAMAP-Rule" id="MF_01317"/>
    </source>
</evidence>
<name>PSBL_MESVI</name>